<organism>
    <name type="scientific">Aspergillus oryzae (strain ATCC 42149 / RIB 40)</name>
    <name type="common">Yellow koji mold</name>
    <dbReference type="NCBI Taxonomy" id="510516"/>
    <lineage>
        <taxon>Eukaryota</taxon>
        <taxon>Fungi</taxon>
        <taxon>Dikarya</taxon>
        <taxon>Ascomycota</taxon>
        <taxon>Pezizomycotina</taxon>
        <taxon>Eurotiomycetes</taxon>
        <taxon>Eurotiomycetidae</taxon>
        <taxon>Eurotiales</taxon>
        <taxon>Aspergillaceae</taxon>
        <taxon>Aspergillus</taxon>
        <taxon>Aspergillus subgen. Circumdati</taxon>
    </lineage>
</organism>
<evidence type="ECO:0000255" key="1">
    <source>
        <dbReference type="PROSITE-ProRule" id="PRU00054"/>
    </source>
</evidence>
<evidence type="ECO:0000269" key="2">
    <source>
    </source>
</evidence>
<evidence type="ECO:0000303" key="3">
    <source>
    </source>
</evidence>
<evidence type="ECO:0000305" key="4"/>
<gene>
    <name type="ORF">AO090020000385</name>
</gene>
<reference key="1">
    <citation type="journal article" date="2005" name="Nature">
        <title>Genome sequencing and analysis of Aspergillus oryzae.</title>
        <authorList>
            <person name="Machida M."/>
            <person name="Asai K."/>
            <person name="Sano M."/>
            <person name="Tanaka T."/>
            <person name="Kumagai T."/>
            <person name="Terai G."/>
            <person name="Kusumoto K."/>
            <person name="Arima T."/>
            <person name="Akita O."/>
            <person name="Kashiwagi Y."/>
            <person name="Abe K."/>
            <person name="Gomi K."/>
            <person name="Horiuchi H."/>
            <person name="Kitamoto K."/>
            <person name="Kobayashi T."/>
            <person name="Takeuchi M."/>
            <person name="Denning D.W."/>
            <person name="Galagan J.E."/>
            <person name="Nierman W.C."/>
            <person name="Yu J."/>
            <person name="Archer D.B."/>
            <person name="Bennett J.W."/>
            <person name="Bhatnagar D."/>
            <person name="Cleveland T.E."/>
            <person name="Fedorova N.D."/>
            <person name="Gotoh O."/>
            <person name="Horikawa H."/>
            <person name="Hosoyama A."/>
            <person name="Ichinomiya M."/>
            <person name="Igarashi R."/>
            <person name="Iwashita K."/>
            <person name="Juvvadi P.R."/>
            <person name="Kato M."/>
            <person name="Kato Y."/>
            <person name="Kin T."/>
            <person name="Kokubun A."/>
            <person name="Maeda H."/>
            <person name="Maeyama N."/>
            <person name="Maruyama J."/>
            <person name="Nagasaki H."/>
            <person name="Nakajima T."/>
            <person name="Oda K."/>
            <person name="Okada K."/>
            <person name="Paulsen I."/>
            <person name="Sakamoto K."/>
            <person name="Sawano T."/>
            <person name="Takahashi M."/>
            <person name="Takase K."/>
            <person name="Terabayashi Y."/>
            <person name="Wortman J.R."/>
            <person name="Yamada O."/>
            <person name="Yamagata Y."/>
            <person name="Anazawa H."/>
            <person name="Hata Y."/>
            <person name="Koide Y."/>
            <person name="Komori T."/>
            <person name="Koyama Y."/>
            <person name="Minetoki T."/>
            <person name="Suharnan S."/>
            <person name="Tanaka A."/>
            <person name="Isono K."/>
            <person name="Kuhara S."/>
            <person name="Ogasawara N."/>
            <person name="Kikuchi H."/>
        </authorList>
    </citation>
    <scope>NUCLEOTIDE SEQUENCE [LARGE SCALE GENOMIC DNA]</scope>
    <source>
        <strain>ATCC 42149 / RIB 40</strain>
    </source>
</reference>
<reference key="2">
    <citation type="journal article" date="2013" name="Mol. Biotechnol.">
        <title>A comparative study of nitrilases identified by genome mining.</title>
        <authorList>
            <person name="Kaplan O."/>
            <person name="Vesela A.B."/>
            <person name="Petrickova A."/>
            <person name="Pasquarelli F."/>
            <person name="Picmanova M."/>
            <person name="Rinagelova A."/>
            <person name="Bhalla T.C."/>
            <person name="Patek M."/>
            <person name="Martinkova L."/>
        </authorList>
    </citation>
    <scope>FUNCTION</scope>
    <scope>CATALYTIC ACTIVITY</scope>
</reference>
<keyword id="KW-0378">Hydrolase</keyword>
<keyword id="KW-1185">Reference proteome</keyword>
<sequence length="333" mass="36804">MTTPQPSQVRVAVTQAEPVWLDLKATVDKTCSLIAEAASKGAQLVSFPECWIPGYPAWIWTRPVDQELHSRYIQNSLTVSSPEMTQICKSANENNVIVVLGFSENIHNSLYISQAIISNTGSILTTRKKIKATHMERTIFGDAFADCLDSVVETAVGRVGALSCWEHIQPLLKYHTCAQREAIHVAAWPPLFEWGGPEDESLFSMSRDGTIALARTYAIESSSFVLHTTAVISQEGVEKMRTATGAIMNMPGGGSSAIFGPDGRLLSKPLLPTEEGIIYADLEMHDIYKTKAFVDVLGHYSRPDLLWLGVGSCDRRHVKEDAEERREDRVEVL</sequence>
<comment type="function">
    <text evidence="2">Nitrilase that hydrolyzes preferentially phenylacetonitrile, (R,S)-mandelonitrile, and 3-indolylacetonitrile.</text>
</comment>
<comment type="catalytic activity">
    <reaction evidence="2">
        <text>a nitrile + 2 H2O = a carboxylate + NH4(+)</text>
        <dbReference type="Rhea" id="RHEA:21724"/>
        <dbReference type="ChEBI" id="CHEBI:15377"/>
        <dbReference type="ChEBI" id="CHEBI:18379"/>
        <dbReference type="ChEBI" id="CHEBI:28938"/>
        <dbReference type="ChEBI" id="CHEBI:29067"/>
        <dbReference type="EC" id="3.5.5.1"/>
    </reaction>
</comment>
<comment type="catalytic activity">
    <reaction evidence="2">
        <text>4-chlorophenylacetonitrile + 2 H2O = 4-chlorophenylacetate + NH4(+)</text>
        <dbReference type="Rhea" id="RHEA:20657"/>
        <dbReference type="ChEBI" id="CHEBI:15377"/>
        <dbReference type="ChEBI" id="CHEBI:16237"/>
        <dbReference type="ChEBI" id="CHEBI:17346"/>
        <dbReference type="ChEBI" id="CHEBI:28938"/>
        <dbReference type="EC" id="3.5.5.5"/>
    </reaction>
</comment>
<comment type="similarity">
    <text evidence="4">Belongs to the carbon-nitrogen hydrolase superfamily. Nitrilase family.</text>
</comment>
<protein>
    <recommendedName>
        <fullName evidence="3">Arylacetonitrilase</fullName>
        <ecNumber evidence="2">3.5.5.1</ecNumber>
        <ecNumber evidence="2">3.5.5.5</ecNumber>
    </recommendedName>
    <alternativeName>
        <fullName evidence="3">NitAo</fullName>
    </alternativeName>
</protein>
<proteinExistence type="evidence at protein level"/>
<dbReference type="EC" id="3.5.5.1" evidence="2"/>
<dbReference type="EC" id="3.5.5.5" evidence="2"/>
<dbReference type="EMBL" id="BA000054">
    <property type="protein sequence ID" value="BAE63579.1"/>
    <property type="molecule type" value="Genomic_DNA"/>
</dbReference>
<dbReference type="RefSeq" id="XP_001824712.1">
    <property type="nucleotide sequence ID" value="XM_001824660.1"/>
</dbReference>
<dbReference type="SMR" id="Q2U4D6"/>
<dbReference type="STRING" id="510516.Q2U4D6"/>
<dbReference type="EnsemblFungi" id="BAE63579">
    <property type="protein sequence ID" value="BAE63579"/>
    <property type="gene ID" value="AO090020000385"/>
</dbReference>
<dbReference type="GeneID" id="5996798"/>
<dbReference type="KEGG" id="aor:AO090020000385"/>
<dbReference type="VEuPathDB" id="FungiDB:AO090020000385"/>
<dbReference type="HOGENOM" id="CLU_030130_6_0_1"/>
<dbReference type="OMA" id="WYPYFSF"/>
<dbReference type="OrthoDB" id="31795at5052"/>
<dbReference type="Proteomes" id="UP000006564">
    <property type="component" value="Chromosome 6"/>
</dbReference>
<dbReference type="GO" id="GO:0047428">
    <property type="term" value="F:arylacetonitrilase activity"/>
    <property type="evidence" value="ECO:0007669"/>
    <property type="project" value="UniProtKB-EC"/>
</dbReference>
<dbReference type="GO" id="GO:0016836">
    <property type="term" value="F:hydro-lyase activity"/>
    <property type="evidence" value="ECO:0007669"/>
    <property type="project" value="UniProtKB-ARBA"/>
</dbReference>
<dbReference type="CDD" id="cd07564">
    <property type="entry name" value="nitrilases_CHs"/>
    <property type="match status" value="1"/>
</dbReference>
<dbReference type="FunFam" id="3.60.110.10:FF:000011">
    <property type="entry name" value="Cyanide hydratase"/>
    <property type="match status" value="1"/>
</dbReference>
<dbReference type="Gene3D" id="3.60.110.10">
    <property type="entry name" value="Carbon-nitrogen hydrolase"/>
    <property type="match status" value="1"/>
</dbReference>
<dbReference type="InterPro" id="IPR003010">
    <property type="entry name" value="C-N_Hydrolase"/>
</dbReference>
<dbReference type="InterPro" id="IPR036526">
    <property type="entry name" value="C-N_Hydrolase_sf"/>
</dbReference>
<dbReference type="InterPro" id="IPR000132">
    <property type="entry name" value="Nitrilase/CN_hydratase_CS"/>
</dbReference>
<dbReference type="InterPro" id="IPR044149">
    <property type="entry name" value="Nitrilases_CHs"/>
</dbReference>
<dbReference type="PANTHER" id="PTHR46044:SF14">
    <property type="entry name" value="ARYLACETONITRILASE"/>
    <property type="match status" value="1"/>
</dbReference>
<dbReference type="PANTHER" id="PTHR46044">
    <property type="entry name" value="NITRILASE"/>
    <property type="match status" value="1"/>
</dbReference>
<dbReference type="Pfam" id="PF00795">
    <property type="entry name" value="CN_hydrolase"/>
    <property type="match status" value="1"/>
</dbReference>
<dbReference type="SUPFAM" id="SSF56317">
    <property type="entry name" value="Carbon-nitrogen hydrolase"/>
    <property type="match status" value="1"/>
</dbReference>
<dbReference type="PROSITE" id="PS50263">
    <property type="entry name" value="CN_HYDROLASE"/>
    <property type="match status" value="1"/>
</dbReference>
<dbReference type="PROSITE" id="PS00920">
    <property type="entry name" value="NITRIL_CHT_1"/>
    <property type="match status" value="1"/>
</dbReference>
<dbReference type="PROSITE" id="PS00921">
    <property type="entry name" value="NITRIL_CHT_2"/>
    <property type="match status" value="1"/>
</dbReference>
<accession>Q2U4D6</accession>
<name>NIT_ASPOR</name>
<feature type="chain" id="PRO_0000432176" description="Arylacetonitrilase">
    <location>
        <begin position="1"/>
        <end position="333"/>
    </location>
</feature>
<feature type="domain" description="CN hydrolase" evidence="1">
    <location>
        <begin position="9"/>
        <end position="284"/>
    </location>
</feature>
<feature type="active site" description="Proton acceptor" evidence="1">
    <location>
        <position position="49"/>
    </location>
</feature>
<feature type="active site" evidence="1">
    <location>
        <position position="129"/>
    </location>
</feature>
<feature type="active site" description="Nucleophile" evidence="1">
    <location>
        <position position="164"/>
    </location>
</feature>